<sequence>MTEPTGDQTPEIIGVRRGMFGAKGSGDTSGYGRLVRPVALPGGSPRPYGGYFDEVVDRLAEAVGDDAFTESIERVVIHRDELTLEVHRDRLVEVAQALRDDPALRFELCLGVSGVHYPDDTGRELHAAYPLMSITHNRRIRLEVAVPDDDPHIPSLFGVYPTVDWHERETYDFFGIIFDGHPSLTRIEMPDDWVGHPQRKDYPLGGIPVEYHGAEIPPPDQRRAYN</sequence>
<protein>
    <recommendedName>
        <fullName evidence="1">NADH-quinone oxidoreductase subunit C</fullName>
        <ecNumber evidence="1">7.1.1.-</ecNumber>
    </recommendedName>
    <alternativeName>
        <fullName evidence="1">NADH dehydrogenase I subunit C</fullName>
    </alternativeName>
    <alternativeName>
        <fullName evidence="1">NDH-1 subunit C</fullName>
    </alternativeName>
</protein>
<organism>
    <name type="scientific">Mycolicibacterium gilvum (strain PYR-GCK)</name>
    <name type="common">Mycobacterium gilvum (strain PYR-GCK)</name>
    <dbReference type="NCBI Taxonomy" id="350054"/>
    <lineage>
        <taxon>Bacteria</taxon>
        <taxon>Bacillati</taxon>
        <taxon>Actinomycetota</taxon>
        <taxon>Actinomycetes</taxon>
        <taxon>Mycobacteriales</taxon>
        <taxon>Mycobacteriaceae</taxon>
        <taxon>Mycolicibacterium</taxon>
    </lineage>
</organism>
<proteinExistence type="inferred from homology"/>
<feature type="chain" id="PRO_0000358134" description="NADH-quinone oxidoreductase subunit C">
    <location>
        <begin position="1"/>
        <end position="226"/>
    </location>
</feature>
<feature type="region of interest" description="Disordered" evidence="2">
    <location>
        <begin position="1"/>
        <end position="21"/>
    </location>
</feature>
<name>NUOC_MYCGI</name>
<keyword id="KW-1003">Cell membrane</keyword>
<keyword id="KW-0472">Membrane</keyword>
<keyword id="KW-0520">NAD</keyword>
<keyword id="KW-0874">Quinone</keyword>
<keyword id="KW-1278">Translocase</keyword>
<keyword id="KW-0813">Transport</keyword>
<dbReference type="EC" id="7.1.1.-" evidence="1"/>
<dbReference type="EMBL" id="CP000656">
    <property type="protein sequence ID" value="ABP46952.1"/>
    <property type="molecule type" value="Genomic_DNA"/>
</dbReference>
<dbReference type="SMR" id="A4TDC0"/>
<dbReference type="STRING" id="350054.Mflv_4483"/>
<dbReference type="KEGG" id="mgi:Mflv_4483"/>
<dbReference type="eggNOG" id="COG0852">
    <property type="taxonomic scope" value="Bacteria"/>
</dbReference>
<dbReference type="HOGENOM" id="CLU_042628_4_0_11"/>
<dbReference type="OrthoDB" id="9803286at2"/>
<dbReference type="GO" id="GO:0005886">
    <property type="term" value="C:plasma membrane"/>
    <property type="evidence" value="ECO:0007669"/>
    <property type="project" value="UniProtKB-SubCell"/>
</dbReference>
<dbReference type="GO" id="GO:0008137">
    <property type="term" value="F:NADH dehydrogenase (ubiquinone) activity"/>
    <property type="evidence" value="ECO:0007669"/>
    <property type="project" value="InterPro"/>
</dbReference>
<dbReference type="GO" id="GO:0050136">
    <property type="term" value="F:NADH:ubiquinone reductase (non-electrogenic) activity"/>
    <property type="evidence" value="ECO:0007669"/>
    <property type="project" value="UniProtKB-UniRule"/>
</dbReference>
<dbReference type="GO" id="GO:0048038">
    <property type="term" value="F:quinone binding"/>
    <property type="evidence" value="ECO:0007669"/>
    <property type="project" value="UniProtKB-KW"/>
</dbReference>
<dbReference type="FunFam" id="3.30.460.80:FF:000006">
    <property type="entry name" value="NADH-quinone oxidoreductase subunit C"/>
    <property type="match status" value="1"/>
</dbReference>
<dbReference type="Gene3D" id="3.30.460.80">
    <property type="entry name" value="NADH:ubiquinone oxidoreductase, 30kDa subunit"/>
    <property type="match status" value="1"/>
</dbReference>
<dbReference type="HAMAP" id="MF_01357">
    <property type="entry name" value="NDH1_NuoC"/>
    <property type="match status" value="1"/>
</dbReference>
<dbReference type="InterPro" id="IPR010218">
    <property type="entry name" value="NADH_DH_suC"/>
</dbReference>
<dbReference type="InterPro" id="IPR037232">
    <property type="entry name" value="NADH_quin_OxRdtase_su_C/D-like"/>
</dbReference>
<dbReference type="InterPro" id="IPR001268">
    <property type="entry name" value="NADH_UbQ_OxRdtase_30kDa_su"/>
</dbReference>
<dbReference type="NCBIfam" id="TIGR01961">
    <property type="entry name" value="NuoC_fam"/>
    <property type="match status" value="1"/>
</dbReference>
<dbReference type="NCBIfam" id="NF005856">
    <property type="entry name" value="PRK07785.1"/>
    <property type="match status" value="1"/>
</dbReference>
<dbReference type="PANTHER" id="PTHR10884:SF14">
    <property type="entry name" value="NADH DEHYDROGENASE [UBIQUINONE] IRON-SULFUR PROTEIN 3, MITOCHONDRIAL"/>
    <property type="match status" value="1"/>
</dbReference>
<dbReference type="PANTHER" id="PTHR10884">
    <property type="entry name" value="NADH DEHYDROGENASE UBIQUINONE IRON-SULFUR PROTEIN 3"/>
    <property type="match status" value="1"/>
</dbReference>
<dbReference type="Pfam" id="PF00329">
    <property type="entry name" value="Complex1_30kDa"/>
    <property type="match status" value="1"/>
</dbReference>
<dbReference type="SUPFAM" id="SSF143243">
    <property type="entry name" value="Nqo5-like"/>
    <property type="match status" value="1"/>
</dbReference>
<evidence type="ECO:0000255" key="1">
    <source>
        <dbReference type="HAMAP-Rule" id="MF_01357"/>
    </source>
</evidence>
<evidence type="ECO:0000256" key="2">
    <source>
        <dbReference type="SAM" id="MobiDB-lite"/>
    </source>
</evidence>
<gene>
    <name evidence="1" type="primary">nuoC</name>
    <name type="ordered locus">Mflv_4483</name>
</gene>
<comment type="function">
    <text evidence="1">NDH-1 shuttles electrons from NADH, via FMN and iron-sulfur (Fe-S) centers, to quinones in the respiratory chain. The immediate electron acceptor for the enzyme in this species is believed to be a menaquinone. Couples the redox reaction to proton translocation (for every two electrons transferred, four hydrogen ions are translocated across the cytoplasmic membrane), and thus conserves the redox energy in a proton gradient.</text>
</comment>
<comment type="catalytic activity">
    <reaction evidence="1">
        <text>a quinone + NADH + 5 H(+)(in) = a quinol + NAD(+) + 4 H(+)(out)</text>
        <dbReference type="Rhea" id="RHEA:57888"/>
        <dbReference type="ChEBI" id="CHEBI:15378"/>
        <dbReference type="ChEBI" id="CHEBI:24646"/>
        <dbReference type="ChEBI" id="CHEBI:57540"/>
        <dbReference type="ChEBI" id="CHEBI:57945"/>
        <dbReference type="ChEBI" id="CHEBI:132124"/>
    </reaction>
</comment>
<comment type="subunit">
    <text evidence="1">NDH-1 is composed of 14 different subunits. Subunits NuoB, C, D, E, F, and G constitute the peripheral sector of the complex.</text>
</comment>
<comment type="subcellular location">
    <subcellularLocation>
        <location evidence="1">Cell membrane</location>
        <topology evidence="1">Peripheral membrane protein</topology>
        <orientation evidence="1">Cytoplasmic side</orientation>
    </subcellularLocation>
</comment>
<comment type="similarity">
    <text evidence="1">Belongs to the complex I 30 kDa subunit family.</text>
</comment>
<reference key="1">
    <citation type="submission" date="2007-04" db="EMBL/GenBank/DDBJ databases">
        <title>Complete sequence of chromosome of Mycobacterium gilvum PYR-GCK.</title>
        <authorList>
            <consortium name="US DOE Joint Genome Institute"/>
            <person name="Copeland A."/>
            <person name="Lucas S."/>
            <person name="Lapidus A."/>
            <person name="Barry K."/>
            <person name="Detter J.C."/>
            <person name="Glavina del Rio T."/>
            <person name="Hammon N."/>
            <person name="Israni S."/>
            <person name="Dalin E."/>
            <person name="Tice H."/>
            <person name="Pitluck S."/>
            <person name="Chain P."/>
            <person name="Malfatti S."/>
            <person name="Shin M."/>
            <person name="Vergez L."/>
            <person name="Schmutz J."/>
            <person name="Larimer F."/>
            <person name="Land M."/>
            <person name="Hauser L."/>
            <person name="Kyrpides N."/>
            <person name="Mikhailova N."/>
            <person name="Miller C."/>
            <person name="Richardson P."/>
        </authorList>
    </citation>
    <scope>NUCLEOTIDE SEQUENCE [LARGE SCALE GENOMIC DNA]</scope>
    <source>
        <strain>PYR-GCK</strain>
    </source>
</reference>
<accession>A4TDC0</accession>